<accession>P09901</accession>
<comment type="function">
    <text evidence="2">With S4 and S5 plays an important role in translational accuracy.</text>
</comment>
<comment type="function">
    <text evidence="2">Interacts with and stabilizes bases of the 16S rRNA that are involved in tRNA selection in the A site and with the mRNA backbone. Located at the interface of the 30S and 50S subunits, it traverses the body of the 30S subunit contacting proteins on the other side and probably holding the rRNA structure together. The combined cluster of proteins S8, S12 and S17 appears to hold together the shoulder and platform of the 30S subunit.</text>
</comment>
<comment type="subunit">
    <text evidence="2">Part of the 30S ribosomal subunit. Contacts proteins S8 and S17. May interact with IF1 in the 30S initiation complex.</text>
</comment>
<comment type="similarity">
    <text evidence="2">Belongs to the universal ribosomal protein uS12 family.</text>
</comment>
<dbReference type="PIR" id="JG0007">
    <property type="entry name" value="R3BS12"/>
</dbReference>
<dbReference type="SMR" id="P09901"/>
<dbReference type="GO" id="GO:0015935">
    <property type="term" value="C:small ribosomal subunit"/>
    <property type="evidence" value="ECO:0007669"/>
    <property type="project" value="InterPro"/>
</dbReference>
<dbReference type="GO" id="GO:0019843">
    <property type="term" value="F:rRNA binding"/>
    <property type="evidence" value="ECO:0007669"/>
    <property type="project" value="UniProtKB-UniRule"/>
</dbReference>
<dbReference type="GO" id="GO:0003735">
    <property type="term" value="F:structural constituent of ribosome"/>
    <property type="evidence" value="ECO:0007669"/>
    <property type="project" value="InterPro"/>
</dbReference>
<dbReference type="GO" id="GO:0000049">
    <property type="term" value="F:tRNA binding"/>
    <property type="evidence" value="ECO:0007669"/>
    <property type="project" value="UniProtKB-UniRule"/>
</dbReference>
<dbReference type="GO" id="GO:0006412">
    <property type="term" value="P:translation"/>
    <property type="evidence" value="ECO:0007669"/>
    <property type="project" value="UniProtKB-UniRule"/>
</dbReference>
<dbReference type="CDD" id="cd03368">
    <property type="entry name" value="Ribosomal_S12"/>
    <property type="match status" value="1"/>
</dbReference>
<dbReference type="FunFam" id="2.40.50.140:FF:000001">
    <property type="entry name" value="30S ribosomal protein S12"/>
    <property type="match status" value="1"/>
</dbReference>
<dbReference type="Gene3D" id="2.40.50.140">
    <property type="entry name" value="Nucleic acid-binding proteins"/>
    <property type="match status" value="1"/>
</dbReference>
<dbReference type="HAMAP" id="MF_00403_B">
    <property type="entry name" value="Ribosomal_uS12_B"/>
    <property type="match status" value="1"/>
</dbReference>
<dbReference type="InterPro" id="IPR012340">
    <property type="entry name" value="NA-bd_OB-fold"/>
</dbReference>
<dbReference type="InterPro" id="IPR006032">
    <property type="entry name" value="Ribosomal_uS12"/>
</dbReference>
<dbReference type="InterPro" id="IPR005679">
    <property type="entry name" value="Ribosomal_uS12_bac"/>
</dbReference>
<dbReference type="NCBIfam" id="TIGR00981">
    <property type="entry name" value="rpsL_bact"/>
    <property type="match status" value="1"/>
</dbReference>
<dbReference type="PANTHER" id="PTHR11652">
    <property type="entry name" value="30S RIBOSOMAL PROTEIN S12 FAMILY MEMBER"/>
    <property type="match status" value="1"/>
</dbReference>
<dbReference type="Pfam" id="PF00164">
    <property type="entry name" value="Ribosom_S12_S23"/>
    <property type="match status" value="1"/>
</dbReference>
<dbReference type="PIRSF" id="PIRSF002133">
    <property type="entry name" value="Ribosomal_S12/S23"/>
    <property type="match status" value="1"/>
</dbReference>
<dbReference type="PRINTS" id="PR01034">
    <property type="entry name" value="RIBOSOMALS12"/>
</dbReference>
<dbReference type="SUPFAM" id="SSF50249">
    <property type="entry name" value="Nucleic acid-binding proteins"/>
    <property type="match status" value="1"/>
</dbReference>
<dbReference type="PROSITE" id="PS00055">
    <property type="entry name" value="RIBOSOMAL_S12"/>
    <property type="match status" value="1"/>
</dbReference>
<name>RS12_GEOSE</name>
<reference key="1">
    <citation type="journal article" date="1991" name="Agric. Biol. Chem.">
        <title>The nucleotide sequences of Bacillus stearothermophilus ribosomal protein S12 and S7 genes: comparison with the str operon of Escherichia coli.</title>
        <authorList>
            <person name="Kimura M."/>
        </authorList>
    </citation>
    <scope>NUCLEOTIDE SEQUENCE [GENOMIC DNA]</scope>
    <source>
        <strain>ATCC 29609 / DSM 2027 / NCA 1503 / NCIMB 8924</strain>
    </source>
</reference>
<reference key="2">
    <citation type="journal article" date="1987" name="FEBS Lett.">
        <title>The complete amino acid sequence of ribosomal protein S12 from Bacillus stearothermophilus.</title>
        <authorList>
            <person name="Kimura M."/>
            <person name="Kimura J."/>
        </authorList>
    </citation>
    <scope>PROTEIN SEQUENCE OF 2-139</scope>
    <scope>NUCLEOTIDE SEQUENCE [GENOMIC DNA] OF 2-79</scope>
    <source>
        <strain>ATCC 29609 / DSM 2027 / NCA 1503 / NCIMB 8924</strain>
    </source>
</reference>
<reference key="3">
    <citation type="journal article" date="1974" name="FEBS Lett.">
        <title>Procaryotic ribosomal proteins: N-terminal sequence homologies and structural correspondence of 30 S ribosomal proteins from Escherichia coli and Bacillus stearothermophilus.</title>
        <authorList>
            <person name="Yaguchi M."/>
            <person name="Matheson A.T."/>
            <person name="Visentin L.P."/>
        </authorList>
    </citation>
    <scope>PROTEIN SEQUENCE OF 2-16</scope>
    <source>
        <strain>DSM 13240 / CIP 106956 / 10</strain>
    </source>
</reference>
<keyword id="KW-0903">Direct protein sequencing</keyword>
<keyword id="KW-0488">Methylation</keyword>
<keyword id="KW-0687">Ribonucleoprotein</keyword>
<keyword id="KW-0689">Ribosomal protein</keyword>
<keyword id="KW-0694">RNA-binding</keyword>
<keyword id="KW-0699">rRNA-binding</keyword>
<keyword id="KW-0820">tRNA-binding</keyword>
<sequence length="140" mass="15510">MPTINQLVRKGREKKVFKSKSPALNKGYNSFKKEQTNVASPQKRGVCTRVGTMTPKKPNSALRKYARVRLTNGIEVTAYIPGIGHNLQEHSVVLIRGGRVKDLRGVRYHIIRGGLDTAGVANRMQGRSKYGAKKPKAAKK</sequence>
<feature type="initiator methionine" description="Removed" evidence="3 4">
    <location>
        <position position="1"/>
    </location>
</feature>
<feature type="chain" id="PRO_0000146177" description="Small ribosomal subunit protein uS12">
    <location>
        <begin position="2"/>
        <end position="140"/>
    </location>
</feature>
<feature type="modified residue" description="3-methylthioaspartic acid" evidence="1">
    <location>
        <position position="102"/>
    </location>
</feature>
<feature type="sequence conflict" description="In Ref. 2; AA sequence." evidence="5" ref="2">
    <original>R</original>
    <variation>P</variation>
    <location>
        <position position="104"/>
    </location>
</feature>
<feature type="sequence conflict" description="In Ref. 2; AA sequence." evidence="5" ref="2">
    <original>G</original>
    <variation>A</variation>
    <location>
        <position position="114"/>
    </location>
</feature>
<organism>
    <name type="scientific">Geobacillus stearothermophilus</name>
    <name type="common">Bacillus stearothermophilus</name>
    <dbReference type="NCBI Taxonomy" id="1422"/>
    <lineage>
        <taxon>Bacteria</taxon>
        <taxon>Bacillati</taxon>
        <taxon>Bacillota</taxon>
        <taxon>Bacilli</taxon>
        <taxon>Bacillales</taxon>
        <taxon>Anoxybacillaceae</taxon>
        <taxon>Geobacillus</taxon>
    </lineage>
</organism>
<evidence type="ECO:0000250" key="1"/>
<evidence type="ECO:0000255" key="2">
    <source>
        <dbReference type="HAMAP-Rule" id="MF_00403"/>
    </source>
</evidence>
<evidence type="ECO:0000269" key="3">
    <source>
    </source>
</evidence>
<evidence type="ECO:0000269" key="4">
    <source>
    </source>
</evidence>
<evidence type="ECO:0000305" key="5"/>
<proteinExistence type="evidence at protein level"/>
<gene>
    <name evidence="2" type="primary">rpsL</name>
</gene>
<protein>
    <recommendedName>
        <fullName evidence="2">Small ribosomal subunit protein uS12</fullName>
    </recommendedName>
    <alternativeName>
        <fullName evidence="5">30S ribosomal protein S12</fullName>
        <shortName>BS12</shortName>
    </alternativeName>
</protein>